<protein>
    <recommendedName>
        <fullName evidence="1">Large-conductance mechanosensitive channel</fullName>
    </recommendedName>
</protein>
<name>MSCL_PSE14</name>
<sequence>MSVLSEFKAFAVKGNVVDMAVGIIIGAAFGKIVSSFVGDVIMPPLGLLIGGVDFSDLAITLRPAQGTAPAVLLAYGKFIQTVIDFIIVAFAIFMGVKAINRLKREEAKAPTLPPTPSKQEVLLSEIRDLLKEQNKPAAPVTVDPTRPL</sequence>
<feature type="chain" id="PRO_0000238020" description="Large-conductance mechanosensitive channel">
    <location>
        <begin position="1"/>
        <end position="148"/>
    </location>
</feature>
<feature type="transmembrane region" description="Helical" evidence="1">
    <location>
        <begin position="9"/>
        <end position="29"/>
    </location>
</feature>
<feature type="transmembrane region" description="Helical" evidence="1">
    <location>
        <begin position="79"/>
        <end position="99"/>
    </location>
</feature>
<reference key="1">
    <citation type="journal article" date="2005" name="J. Bacteriol.">
        <title>Whole-genome sequence analysis of Pseudomonas syringae pv. phaseolicola 1448A reveals divergence among pathovars in genes involved in virulence and transposition.</title>
        <authorList>
            <person name="Joardar V."/>
            <person name="Lindeberg M."/>
            <person name="Jackson R.W."/>
            <person name="Selengut J."/>
            <person name="Dodson R."/>
            <person name="Brinkac L.M."/>
            <person name="Daugherty S.C."/>
            <person name="DeBoy R.T."/>
            <person name="Durkin A.S."/>
            <person name="Gwinn Giglio M."/>
            <person name="Madupu R."/>
            <person name="Nelson W.C."/>
            <person name="Rosovitz M.J."/>
            <person name="Sullivan S.A."/>
            <person name="Crabtree J."/>
            <person name="Creasy T."/>
            <person name="Davidsen T.M."/>
            <person name="Haft D.H."/>
            <person name="Zafar N."/>
            <person name="Zhou L."/>
            <person name="Halpin R."/>
            <person name="Holley T."/>
            <person name="Khouri H.M."/>
            <person name="Feldblyum T.V."/>
            <person name="White O."/>
            <person name="Fraser C.M."/>
            <person name="Chatterjee A.K."/>
            <person name="Cartinhour S."/>
            <person name="Schneider D."/>
            <person name="Mansfield J.W."/>
            <person name="Collmer A."/>
            <person name="Buell R."/>
        </authorList>
    </citation>
    <scope>NUCLEOTIDE SEQUENCE [LARGE SCALE GENOMIC DNA]</scope>
    <source>
        <strain>1448A / Race 6</strain>
    </source>
</reference>
<keyword id="KW-0997">Cell inner membrane</keyword>
<keyword id="KW-1003">Cell membrane</keyword>
<keyword id="KW-0407">Ion channel</keyword>
<keyword id="KW-0406">Ion transport</keyword>
<keyword id="KW-0472">Membrane</keyword>
<keyword id="KW-0812">Transmembrane</keyword>
<keyword id="KW-1133">Transmembrane helix</keyword>
<keyword id="KW-0813">Transport</keyword>
<gene>
    <name evidence="1" type="primary">mscL</name>
    <name type="ordered locus">PSPPH_4333</name>
</gene>
<evidence type="ECO:0000255" key="1">
    <source>
        <dbReference type="HAMAP-Rule" id="MF_00115"/>
    </source>
</evidence>
<accession>Q48DU1</accession>
<proteinExistence type="inferred from homology"/>
<dbReference type="EMBL" id="CP000058">
    <property type="protein sequence ID" value="AAZ36502.1"/>
    <property type="molecule type" value="Genomic_DNA"/>
</dbReference>
<dbReference type="RefSeq" id="WP_002555236.1">
    <property type="nucleotide sequence ID" value="NC_005773.3"/>
</dbReference>
<dbReference type="SMR" id="Q48DU1"/>
<dbReference type="GeneID" id="69861345"/>
<dbReference type="KEGG" id="psp:PSPPH_4333"/>
<dbReference type="eggNOG" id="COG1970">
    <property type="taxonomic scope" value="Bacteria"/>
</dbReference>
<dbReference type="HOGENOM" id="CLU_095787_0_0_6"/>
<dbReference type="Proteomes" id="UP000000551">
    <property type="component" value="Chromosome"/>
</dbReference>
<dbReference type="GO" id="GO:0005886">
    <property type="term" value="C:plasma membrane"/>
    <property type="evidence" value="ECO:0007669"/>
    <property type="project" value="UniProtKB-SubCell"/>
</dbReference>
<dbReference type="GO" id="GO:0008381">
    <property type="term" value="F:mechanosensitive monoatomic ion channel activity"/>
    <property type="evidence" value="ECO:0007669"/>
    <property type="project" value="UniProtKB-UniRule"/>
</dbReference>
<dbReference type="FunFam" id="1.10.1200.120:FF:000001">
    <property type="entry name" value="Large-conductance mechanosensitive channel"/>
    <property type="match status" value="1"/>
</dbReference>
<dbReference type="Gene3D" id="1.10.1200.120">
    <property type="entry name" value="Large-conductance mechanosensitive channel, MscL, domain 1"/>
    <property type="match status" value="1"/>
</dbReference>
<dbReference type="HAMAP" id="MF_00115">
    <property type="entry name" value="MscL"/>
    <property type="match status" value="1"/>
</dbReference>
<dbReference type="InterPro" id="IPR019823">
    <property type="entry name" value="Mechanosensitive_channel_CS"/>
</dbReference>
<dbReference type="InterPro" id="IPR001185">
    <property type="entry name" value="MS_channel"/>
</dbReference>
<dbReference type="InterPro" id="IPR037673">
    <property type="entry name" value="MSC/AndL"/>
</dbReference>
<dbReference type="InterPro" id="IPR036019">
    <property type="entry name" value="MscL_channel"/>
</dbReference>
<dbReference type="NCBIfam" id="TIGR00220">
    <property type="entry name" value="mscL"/>
    <property type="match status" value="1"/>
</dbReference>
<dbReference type="NCBIfam" id="NF001843">
    <property type="entry name" value="PRK00567.1-4"/>
    <property type="match status" value="1"/>
</dbReference>
<dbReference type="PANTHER" id="PTHR30266:SF2">
    <property type="entry name" value="LARGE-CONDUCTANCE MECHANOSENSITIVE CHANNEL"/>
    <property type="match status" value="1"/>
</dbReference>
<dbReference type="PANTHER" id="PTHR30266">
    <property type="entry name" value="MECHANOSENSITIVE CHANNEL MSCL"/>
    <property type="match status" value="1"/>
</dbReference>
<dbReference type="Pfam" id="PF01741">
    <property type="entry name" value="MscL"/>
    <property type="match status" value="1"/>
</dbReference>
<dbReference type="PRINTS" id="PR01264">
    <property type="entry name" value="MECHCHANNEL"/>
</dbReference>
<dbReference type="SUPFAM" id="SSF81330">
    <property type="entry name" value="Gated mechanosensitive channel"/>
    <property type="match status" value="1"/>
</dbReference>
<dbReference type="PROSITE" id="PS01327">
    <property type="entry name" value="MSCL"/>
    <property type="match status" value="1"/>
</dbReference>
<organism>
    <name type="scientific">Pseudomonas savastanoi pv. phaseolicola (strain 1448A / Race 6)</name>
    <name type="common">Pseudomonas syringae pv. phaseolicola (strain 1448A / Race 6)</name>
    <dbReference type="NCBI Taxonomy" id="264730"/>
    <lineage>
        <taxon>Bacteria</taxon>
        <taxon>Pseudomonadati</taxon>
        <taxon>Pseudomonadota</taxon>
        <taxon>Gammaproteobacteria</taxon>
        <taxon>Pseudomonadales</taxon>
        <taxon>Pseudomonadaceae</taxon>
        <taxon>Pseudomonas</taxon>
    </lineage>
</organism>
<comment type="function">
    <text evidence="1">Channel that opens in response to stretch forces in the membrane lipid bilayer. May participate in the regulation of osmotic pressure changes within the cell.</text>
</comment>
<comment type="subunit">
    <text evidence="1">Homopentamer.</text>
</comment>
<comment type="subcellular location">
    <subcellularLocation>
        <location evidence="1">Cell inner membrane</location>
        <topology evidence="1">Multi-pass membrane protein</topology>
    </subcellularLocation>
</comment>
<comment type="similarity">
    <text evidence="1">Belongs to the MscL family.</text>
</comment>